<comment type="function">
    <text evidence="1">NDH shuttles electrons from NAD(P)H:plastoquinone, via FMN and iron-sulfur (Fe-S) centers, to quinones in the photosynthetic chain and possibly in a chloroplast respiratory chain. The immediate electron acceptor for the enzyme in this species is believed to be plastoquinone. Couples the redox reaction to proton translocation, and thus conserves the redox energy in a proton gradient.</text>
</comment>
<comment type="catalytic activity">
    <reaction evidence="1">
        <text>a plastoquinone + NADH + (n+1) H(+)(in) = a plastoquinol + NAD(+) + n H(+)(out)</text>
        <dbReference type="Rhea" id="RHEA:42608"/>
        <dbReference type="Rhea" id="RHEA-COMP:9561"/>
        <dbReference type="Rhea" id="RHEA-COMP:9562"/>
        <dbReference type="ChEBI" id="CHEBI:15378"/>
        <dbReference type="ChEBI" id="CHEBI:17757"/>
        <dbReference type="ChEBI" id="CHEBI:57540"/>
        <dbReference type="ChEBI" id="CHEBI:57945"/>
        <dbReference type="ChEBI" id="CHEBI:62192"/>
    </reaction>
</comment>
<comment type="catalytic activity">
    <reaction evidence="1">
        <text>a plastoquinone + NADPH + (n+1) H(+)(in) = a plastoquinol + NADP(+) + n H(+)(out)</text>
        <dbReference type="Rhea" id="RHEA:42612"/>
        <dbReference type="Rhea" id="RHEA-COMP:9561"/>
        <dbReference type="Rhea" id="RHEA-COMP:9562"/>
        <dbReference type="ChEBI" id="CHEBI:15378"/>
        <dbReference type="ChEBI" id="CHEBI:17757"/>
        <dbReference type="ChEBI" id="CHEBI:57783"/>
        <dbReference type="ChEBI" id="CHEBI:58349"/>
        <dbReference type="ChEBI" id="CHEBI:62192"/>
    </reaction>
</comment>
<comment type="cofactor">
    <cofactor evidence="1">
        <name>[4Fe-4S] cluster</name>
        <dbReference type="ChEBI" id="CHEBI:49883"/>
    </cofactor>
    <text evidence="1">Binds 2 [4Fe-4S] clusters per subunit.</text>
</comment>
<comment type="subunit">
    <text evidence="1">NDH is composed of at least 16 different subunits, 5 of which are encoded in the nucleus.</text>
</comment>
<comment type="subcellular location">
    <subcellularLocation>
        <location evidence="1">Plastid</location>
        <location evidence="1">Chloroplast thylakoid membrane</location>
        <topology evidence="1">Peripheral membrane protein</topology>
    </subcellularLocation>
</comment>
<comment type="similarity">
    <text evidence="1">Belongs to the complex I 23 kDa subunit family.</text>
</comment>
<dbReference type="EC" id="7.1.1.-" evidence="1"/>
<dbReference type="EMBL" id="AF383830">
    <property type="protein sequence ID" value="AAN61771.1"/>
    <property type="molecule type" value="Genomic_DNA"/>
</dbReference>
<dbReference type="SMR" id="Q8HVN3"/>
<dbReference type="GO" id="GO:0009535">
    <property type="term" value="C:chloroplast thylakoid membrane"/>
    <property type="evidence" value="ECO:0007669"/>
    <property type="project" value="UniProtKB-SubCell"/>
</dbReference>
<dbReference type="GO" id="GO:0051539">
    <property type="term" value="F:4 iron, 4 sulfur cluster binding"/>
    <property type="evidence" value="ECO:0007669"/>
    <property type="project" value="UniProtKB-KW"/>
</dbReference>
<dbReference type="GO" id="GO:0005506">
    <property type="term" value="F:iron ion binding"/>
    <property type="evidence" value="ECO:0007669"/>
    <property type="project" value="UniProtKB-UniRule"/>
</dbReference>
<dbReference type="GO" id="GO:0008137">
    <property type="term" value="F:NADH dehydrogenase (ubiquinone) activity"/>
    <property type="evidence" value="ECO:0007669"/>
    <property type="project" value="InterPro"/>
</dbReference>
<dbReference type="GO" id="GO:0048038">
    <property type="term" value="F:quinone binding"/>
    <property type="evidence" value="ECO:0007669"/>
    <property type="project" value="UniProtKB-KW"/>
</dbReference>
<dbReference type="GO" id="GO:0019684">
    <property type="term" value="P:photosynthesis, light reaction"/>
    <property type="evidence" value="ECO:0007669"/>
    <property type="project" value="UniProtKB-UniRule"/>
</dbReference>
<dbReference type="FunFam" id="3.30.70.3270:FF:000006">
    <property type="entry name" value="NAD(P)H-quinone oxidoreductase subunit I, chloroplastic"/>
    <property type="match status" value="1"/>
</dbReference>
<dbReference type="Gene3D" id="3.30.70.3270">
    <property type="match status" value="1"/>
</dbReference>
<dbReference type="HAMAP" id="MF_01351">
    <property type="entry name" value="NDH1_NuoI"/>
    <property type="match status" value="1"/>
</dbReference>
<dbReference type="InterPro" id="IPR017896">
    <property type="entry name" value="4Fe4S_Fe-S-bd"/>
</dbReference>
<dbReference type="InterPro" id="IPR017900">
    <property type="entry name" value="4Fe4S_Fe_S_CS"/>
</dbReference>
<dbReference type="InterPro" id="IPR010226">
    <property type="entry name" value="NADH_quinone_OxRdtase_chainI"/>
</dbReference>
<dbReference type="InterPro" id="IPR004497">
    <property type="entry name" value="NDHI"/>
</dbReference>
<dbReference type="NCBIfam" id="TIGR00403">
    <property type="entry name" value="ndhI"/>
    <property type="match status" value="1"/>
</dbReference>
<dbReference type="NCBIfam" id="TIGR01971">
    <property type="entry name" value="NuoI"/>
    <property type="match status" value="1"/>
</dbReference>
<dbReference type="NCBIfam" id="NF004537">
    <property type="entry name" value="PRK05888.1-3"/>
    <property type="match status" value="1"/>
</dbReference>
<dbReference type="PANTHER" id="PTHR47275">
    <property type="entry name" value="NAD(P)H-QUINONE OXIDOREDUCTASE SUBUNIT I, CHLOROPLASTIC"/>
    <property type="match status" value="1"/>
</dbReference>
<dbReference type="PANTHER" id="PTHR47275:SF1">
    <property type="entry name" value="NAD(P)H-QUINONE OXIDOREDUCTASE SUBUNIT I, CHLOROPLASTIC"/>
    <property type="match status" value="1"/>
</dbReference>
<dbReference type="Pfam" id="PF00037">
    <property type="entry name" value="Fer4"/>
    <property type="match status" value="2"/>
</dbReference>
<dbReference type="SUPFAM" id="SSF54862">
    <property type="entry name" value="4Fe-4S ferredoxins"/>
    <property type="match status" value="1"/>
</dbReference>
<dbReference type="PROSITE" id="PS00198">
    <property type="entry name" value="4FE4S_FER_1"/>
    <property type="match status" value="2"/>
</dbReference>
<dbReference type="PROSITE" id="PS51379">
    <property type="entry name" value="4FE4S_FER_2"/>
    <property type="match status" value="2"/>
</dbReference>
<gene>
    <name evidence="1" type="primary">ndhI</name>
</gene>
<keyword id="KW-0004">4Fe-4S</keyword>
<keyword id="KW-0150">Chloroplast</keyword>
<keyword id="KW-0408">Iron</keyword>
<keyword id="KW-0411">Iron-sulfur</keyword>
<keyword id="KW-0472">Membrane</keyword>
<keyword id="KW-0479">Metal-binding</keyword>
<keyword id="KW-0520">NAD</keyword>
<keyword id="KW-0521">NADP</keyword>
<keyword id="KW-0934">Plastid</keyword>
<keyword id="KW-0618">Plastoquinone</keyword>
<keyword id="KW-0874">Quinone</keyword>
<keyword id="KW-0677">Repeat</keyword>
<keyword id="KW-0793">Thylakoid</keyword>
<keyword id="KW-1278">Translocase</keyword>
<reference key="1">
    <citation type="submission" date="2003-01" db="EMBL/GenBank/DDBJ databases">
        <title>Chloroplast DNA phylogeny of tribe Heliantheae (Asteraceae).</title>
        <authorList>
            <person name="Panero J.L."/>
            <person name="Baldwin B.G."/>
            <person name="Schilling E.E."/>
            <person name="Clevinger J.A."/>
        </authorList>
    </citation>
    <scope>NUCLEOTIDE SEQUENCE [GENOMIC DNA]</scope>
</reference>
<feature type="chain" id="PRO_0000250828" description="NAD(P)H-quinone oxidoreductase subunit I, chloroplastic">
    <location>
        <begin position="1"/>
        <end position="166"/>
    </location>
</feature>
<feature type="domain" description="4Fe-4S ferredoxin-type 1" evidence="1">
    <location>
        <begin position="55"/>
        <end position="84"/>
    </location>
</feature>
<feature type="domain" description="4Fe-4S ferredoxin-type 2" evidence="1">
    <location>
        <begin position="95"/>
        <end position="124"/>
    </location>
</feature>
<feature type="binding site" evidence="1">
    <location>
        <position position="64"/>
    </location>
    <ligand>
        <name>[4Fe-4S] cluster</name>
        <dbReference type="ChEBI" id="CHEBI:49883"/>
        <label>1</label>
    </ligand>
</feature>
<feature type="binding site" evidence="1">
    <location>
        <position position="67"/>
    </location>
    <ligand>
        <name>[4Fe-4S] cluster</name>
        <dbReference type="ChEBI" id="CHEBI:49883"/>
        <label>1</label>
    </ligand>
</feature>
<feature type="binding site" evidence="1">
    <location>
        <position position="70"/>
    </location>
    <ligand>
        <name>[4Fe-4S] cluster</name>
        <dbReference type="ChEBI" id="CHEBI:49883"/>
        <label>1</label>
    </ligand>
</feature>
<feature type="binding site" evidence="1">
    <location>
        <position position="74"/>
    </location>
    <ligand>
        <name>[4Fe-4S] cluster</name>
        <dbReference type="ChEBI" id="CHEBI:49883"/>
        <label>2</label>
    </ligand>
</feature>
<feature type="binding site" evidence="1">
    <location>
        <position position="104"/>
    </location>
    <ligand>
        <name>[4Fe-4S] cluster</name>
        <dbReference type="ChEBI" id="CHEBI:49883"/>
        <label>2</label>
    </ligand>
</feature>
<feature type="binding site" evidence="1">
    <location>
        <position position="107"/>
    </location>
    <ligand>
        <name>[4Fe-4S] cluster</name>
        <dbReference type="ChEBI" id="CHEBI:49883"/>
        <label>2</label>
    </ligand>
</feature>
<feature type="binding site" evidence="1">
    <location>
        <position position="110"/>
    </location>
    <ligand>
        <name>[4Fe-4S] cluster</name>
        <dbReference type="ChEBI" id="CHEBI:49883"/>
        <label>2</label>
    </ligand>
</feature>
<feature type="binding site" evidence="1">
    <location>
        <position position="114"/>
    </location>
    <ligand>
        <name>[4Fe-4S] cluster</name>
        <dbReference type="ChEBI" id="CHEBI:49883"/>
        <label>1</label>
    </ligand>
</feature>
<accession>Q8HVN3</accession>
<organism>
    <name type="scientific">Pericome caudata</name>
    <name type="common">Mountain tail-leaf</name>
    <name type="synonym">Taper leaf</name>
    <dbReference type="NCBI Taxonomy" id="176559"/>
    <lineage>
        <taxon>Eukaryota</taxon>
        <taxon>Viridiplantae</taxon>
        <taxon>Streptophyta</taxon>
        <taxon>Embryophyta</taxon>
        <taxon>Tracheophyta</taxon>
        <taxon>Spermatophyta</taxon>
        <taxon>Magnoliopsida</taxon>
        <taxon>eudicotyledons</taxon>
        <taxon>Gunneridae</taxon>
        <taxon>Pentapetalae</taxon>
        <taxon>asterids</taxon>
        <taxon>campanulids</taxon>
        <taxon>Asterales</taxon>
        <taxon>Asteraceae</taxon>
        <taxon>Asteroideae</taxon>
        <taxon>Heliantheae alliance</taxon>
        <taxon>Perityleae</taxon>
        <taxon>Pericome</taxon>
    </lineage>
</organism>
<protein>
    <recommendedName>
        <fullName evidence="1">NAD(P)H-quinone oxidoreductase subunit I, chloroplastic</fullName>
        <ecNumber evidence="1">7.1.1.-</ecNumber>
    </recommendedName>
    <alternativeName>
        <fullName evidence="1">NAD(P)H dehydrogenase subunit I</fullName>
        <shortName evidence="1">NDH subunit I</shortName>
    </alternativeName>
    <alternativeName>
        <fullName evidence="1">NADH-plastoquinone oxidoreductase subunit I</fullName>
    </alternativeName>
</protein>
<proteinExistence type="inferred from homology"/>
<evidence type="ECO:0000255" key="1">
    <source>
        <dbReference type="HAMAP-Rule" id="MF_01351"/>
    </source>
</evidence>
<sequence length="166" mass="19475">MFPMVTEFMNYGQQTVRAARYIGQGFMITLSHANRLPVTIQYPYEKLITSERFRGRIHFEFDKCIACEVCVRVCPIDLPVVDWKLETDIRKKRLLNYSIDFGICIFCGNCVEYCPTNCLSMTEEYELSTYDRHELNYNQIALGRLPMSIIDDYTIRTILNLPEIKT</sequence>
<geneLocation type="chloroplast"/>
<name>NDHI_PERCD</name>